<sequence length="512" mass="57485">MEATDPSAEIELYTIPAQSSWFLWDDIHEIERREFAEFFTESSITRTPKVYKEYRDFIINKFREDTCRRLTFTSVRKFLVGDVNLLQKVFLFLEKWGLINFSSSLKKNDHLLSVDNAKIEQGTPAGIRVTATPNSLRPITAPPLVEERVETGIKVPPLTSYSDVFSDLKKPDHVLVCAHCGERCDSPFYQHNKGIVNICEKCFKNGNYGENNTADDFKLIGNSAAAVWTEEEILLLLESVLKHGDDWELISQSVSTKSRLDCISKLIELPFGEFLMGSASGRLNPSILTEDENTEQVQTDGQEHEETETREEKEDRVNEDEPPAKRKRVALISEGDSSLMKQVAAMASKVGPSVATAAAKAALAALCDEASCPKEIFDTDDYSNFTVDRANGEKDTDMEEQQEEKDGPQGLPVALRIRASVATALGAAAAQAKILADQEEREMEQLAATVIEQQLKKLQSKLKFLDDLESIMDEEEKVIEGVKETIIQERVSVLQCAFRSGITKRWDHTYVK</sequence>
<feature type="chain" id="PRO_0000344527" description="SWI/SNF complex subunit SWI3A">
    <location>
        <begin position="1"/>
        <end position="512"/>
    </location>
</feature>
<feature type="domain" description="SWIRM" evidence="2">
    <location>
        <begin position="13"/>
        <end position="110"/>
    </location>
</feature>
<feature type="domain" description="SANT" evidence="3">
    <location>
        <begin position="223"/>
        <end position="274"/>
    </location>
</feature>
<feature type="region of interest" description="Disordered" evidence="4">
    <location>
        <begin position="291"/>
        <end position="325"/>
    </location>
</feature>
<feature type="coiled-coil region" evidence="1">
    <location>
        <begin position="424"/>
        <end position="488"/>
    </location>
</feature>
<keyword id="KW-0010">Activator</keyword>
<keyword id="KW-0156">Chromatin regulator</keyword>
<keyword id="KW-0175">Coiled coil</keyword>
<keyword id="KW-0217">Developmental protein</keyword>
<keyword id="KW-0238">DNA-binding</keyword>
<keyword id="KW-0539">Nucleus</keyword>
<keyword id="KW-1185">Reference proteome</keyword>
<keyword id="KW-0804">Transcription</keyword>
<keyword id="KW-0805">Transcription regulation</keyword>
<evidence type="ECO:0000255" key="1"/>
<evidence type="ECO:0000255" key="2">
    <source>
        <dbReference type="PROSITE-ProRule" id="PRU00247"/>
    </source>
</evidence>
<evidence type="ECO:0000255" key="3">
    <source>
        <dbReference type="PROSITE-ProRule" id="PRU00624"/>
    </source>
</evidence>
<evidence type="ECO:0000256" key="4">
    <source>
        <dbReference type="SAM" id="MobiDB-lite"/>
    </source>
</evidence>
<evidence type="ECO:0000269" key="5">
    <source>
    </source>
</evidence>
<evidence type="ECO:0000269" key="6">
    <source>
    </source>
</evidence>
<evidence type="ECO:0000269" key="7">
    <source>
    </source>
</evidence>
<evidence type="ECO:0000305" key="8"/>
<reference key="1">
    <citation type="journal article" date="1999" name="Nature">
        <title>Sequence and analysis of chromosome 2 of the plant Arabidopsis thaliana.</title>
        <authorList>
            <person name="Lin X."/>
            <person name="Kaul S."/>
            <person name="Rounsley S.D."/>
            <person name="Shea T.P."/>
            <person name="Benito M.-I."/>
            <person name="Town C.D."/>
            <person name="Fujii C.Y."/>
            <person name="Mason T.M."/>
            <person name="Bowman C.L."/>
            <person name="Barnstead M.E."/>
            <person name="Feldblyum T.V."/>
            <person name="Buell C.R."/>
            <person name="Ketchum K.A."/>
            <person name="Lee J.J."/>
            <person name="Ronning C.M."/>
            <person name="Koo H.L."/>
            <person name="Moffat K.S."/>
            <person name="Cronin L.A."/>
            <person name="Shen M."/>
            <person name="Pai G."/>
            <person name="Van Aken S."/>
            <person name="Umayam L."/>
            <person name="Tallon L.J."/>
            <person name="Gill J.E."/>
            <person name="Adams M.D."/>
            <person name="Carrera A.J."/>
            <person name="Creasy T.H."/>
            <person name="Goodman H.M."/>
            <person name="Somerville C.R."/>
            <person name="Copenhaver G.P."/>
            <person name="Preuss D."/>
            <person name="Nierman W.C."/>
            <person name="White O."/>
            <person name="Eisen J.A."/>
            <person name="Salzberg S.L."/>
            <person name="Fraser C.M."/>
            <person name="Venter J.C."/>
        </authorList>
    </citation>
    <scope>NUCLEOTIDE SEQUENCE [LARGE SCALE GENOMIC DNA]</scope>
    <source>
        <strain>cv. Columbia</strain>
    </source>
</reference>
<reference key="2">
    <citation type="journal article" date="2017" name="Plant J.">
        <title>Araport11: a complete reannotation of the Arabidopsis thaliana reference genome.</title>
        <authorList>
            <person name="Cheng C.Y."/>
            <person name="Krishnakumar V."/>
            <person name="Chan A.P."/>
            <person name="Thibaud-Nissen F."/>
            <person name="Schobel S."/>
            <person name="Town C.D."/>
        </authorList>
    </citation>
    <scope>GENOME REANNOTATION</scope>
    <source>
        <strain>cv. Columbia</strain>
    </source>
</reference>
<reference key="3">
    <citation type="journal article" date="2003" name="Science">
        <title>Empirical analysis of transcriptional activity in the Arabidopsis genome.</title>
        <authorList>
            <person name="Yamada K."/>
            <person name="Lim J."/>
            <person name="Dale J.M."/>
            <person name="Chen H."/>
            <person name="Shinn P."/>
            <person name="Palm C.J."/>
            <person name="Southwick A.M."/>
            <person name="Wu H.C."/>
            <person name="Kim C.J."/>
            <person name="Nguyen M."/>
            <person name="Pham P.K."/>
            <person name="Cheuk R.F."/>
            <person name="Karlin-Newmann G."/>
            <person name="Liu S.X."/>
            <person name="Lam B."/>
            <person name="Sakano H."/>
            <person name="Wu T."/>
            <person name="Yu G."/>
            <person name="Miranda M."/>
            <person name="Quach H.L."/>
            <person name="Tripp M."/>
            <person name="Chang C.H."/>
            <person name="Lee J.M."/>
            <person name="Toriumi M.J."/>
            <person name="Chan M.M."/>
            <person name="Tang C.C."/>
            <person name="Onodera C.S."/>
            <person name="Deng J.M."/>
            <person name="Akiyama K."/>
            <person name="Ansari Y."/>
            <person name="Arakawa T."/>
            <person name="Banh J."/>
            <person name="Banno F."/>
            <person name="Bowser L."/>
            <person name="Brooks S.Y."/>
            <person name="Carninci P."/>
            <person name="Chao Q."/>
            <person name="Choy N."/>
            <person name="Enju A."/>
            <person name="Goldsmith A.D."/>
            <person name="Gurjal M."/>
            <person name="Hansen N.F."/>
            <person name="Hayashizaki Y."/>
            <person name="Johnson-Hopson C."/>
            <person name="Hsuan V.W."/>
            <person name="Iida K."/>
            <person name="Karnes M."/>
            <person name="Khan S."/>
            <person name="Koesema E."/>
            <person name="Ishida J."/>
            <person name="Jiang P.X."/>
            <person name="Jones T."/>
            <person name="Kawai J."/>
            <person name="Kamiya A."/>
            <person name="Meyers C."/>
            <person name="Nakajima M."/>
            <person name="Narusaka M."/>
            <person name="Seki M."/>
            <person name="Sakurai T."/>
            <person name="Satou M."/>
            <person name="Tamse R."/>
            <person name="Vaysberg M."/>
            <person name="Wallender E.K."/>
            <person name="Wong C."/>
            <person name="Yamamura Y."/>
            <person name="Yuan S."/>
            <person name="Shinozaki K."/>
            <person name="Davis R.W."/>
            <person name="Theologis A."/>
            <person name="Ecker J.R."/>
        </authorList>
    </citation>
    <scope>NUCLEOTIDE SEQUENCE [LARGE SCALE MRNA]</scope>
    <source>
        <strain>cv. Columbia</strain>
    </source>
</reference>
<reference key="4">
    <citation type="journal article" date="2003" name="Plant Mol. Biol.">
        <title>CHB2, a member of the SWI3 gene family, is a global regulator in Arabidopsis.</title>
        <authorList>
            <person name="Zhou C."/>
            <person name="Miki B."/>
            <person name="Wu K."/>
        </authorList>
    </citation>
    <scope>TISSUE SPECIFICITY</scope>
</reference>
<reference key="5">
    <citation type="journal article" date="2005" name="Plant Cell">
        <title>SWI3 subunits of putative SWI/SNF chromatin-remodeling complexes play distinct roles during Arabidopsis development.</title>
        <authorList>
            <person name="Sarnowski T.J."/>
            <person name="Rios G."/>
            <person name="Jasik J."/>
            <person name="Swiezewski S."/>
            <person name="Kaczanowski S."/>
            <person name="Li Y."/>
            <person name="Kwiatkowska A."/>
            <person name="Pawlikowska K."/>
            <person name="Kozbial M."/>
            <person name="Kozbial P."/>
            <person name="Koncz C."/>
            <person name="Jerzmanowski A."/>
        </authorList>
    </citation>
    <scope>FUNCTION</scope>
    <scope>DISRUPTION PHENOTYPE</scope>
    <scope>INTERACTION WITH SWI3C; BSH AND FCA</scope>
    <scope>SUBUNIT</scope>
</reference>
<reference key="6">
    <citation type="journal article" date="2006" name="Plant Mol. Biol.">
        <title>The putative SWI/SNF complex subunit BRAHMA activates flower homeotic genes in Arabidopsis thaliana.</title>
        <authorList>
            <person name="Hurtado L."/>
            <person name="Farrona S."/>
            <person name="Reyes J.C."/>
        </authorList>
    </citation>
    <scope>INTERACTION WITH BRM</scope>
</reference>
<accession>Q8W475</accession>
<accession>Q8S8T3</accession>
<comment type="function">
    <text evidence="6">Component of a multiprotein complex equivalent of the SWI/SNF complex, an ATP-dependent chromatin-remodeling complex, which is required for the positive and negative regulation of gene expression of a large number of genes. It changes chromatin structure by altering DNA-histone contacts within a nucleosome, leading eventually to a change in nucleosome position, thus facilitating or repressing binding of gene-specific transcription factors.</text>
</comment>
<comment type="subunit">
    <text evidence="6 7">Homodimers and heterodimers. Interacts with SWI3B, SWI3C, BSH, and the C-terminus of FCA, but not with BRM or SWI3D.</text>
</comment>
<comment type="subcellular location">
    <subcellularLocation>
        <location evidence="3">Nucleus</location>
    </subcellularLocation>
</comment>
<comment type="tissue specificity">
    <text evidence="5">Expressed in roots, stems, leaves and flowers, but not in siliques.</text>
</comment>
<comment type="disruption phenotype">
    <text evidence="6">Plants have an embryo development blocked at the early globular stage.</text>
</comment>
<comment type="sequence caution" evidence="8">
    <conflict type="erroneous gene model prediction">
        <sequence resource="EMBL-CDS" id="AAM14849"/>
    </conflict>
</comment>
<organism>
    <name type="scientific">Arabidopsis thaliana</name>
    <name type="common">Mouse-ear cress</name>
    <dbReference type="NCBI Taxonomy" id="3702"/>
    <lineage>
        <taxon>Eukaryota</taxon>
        <taxon>Viridiplantae</taxon>
        <taxon>Streptophyta</taxon>
        <taxon>Embryophyta</taxon>
        <taxon>Tracheophyta</taxon>
        <taxon>Spermatophyta</taxon>
        <taxon>Magnoliopsida</taxon>
        <taxon>eudicotyledons</taxon>
        <taxon>Gunneridae</taxon>
        <taxon>Pentapetalae</taxon>
        <taxon>rosids</taxon>
        <taxon>malvids</taxon>
        <taxon>Brassicales</taxon>
        <taxon>Brassicaceae</taxon>
        <taxon>Camelineae</taxon>
        <taxon>Arabidopsis</taxon>
    </lineage>
</organism>
<name>SWI3A_ARATH</name>
<proteinExistence type="evidence at protein level"/>
<dbReference type="EMBL" id="AC002535">
    <property type="protein sequence ID" value="AAM14849.1"/>
    <property type="status" value="ALT_SEQ"/>
    <property type="molecule type" value="Genomic_DNA"/>
</dbReference>
<dbReference type="EMBL" id="CP002685">
    <property type="protein sequence ID" value="AEC10865.1"/>
    <property type="molecule type" value="Genomic_DNA"/>
</dbReference>
<dbReference type="EMBL" id="AY062794">
    <property type="protein sequence ID" value="AAL32872.1"/>
    <property type="molecule type" value="mRNA"/>
</dbReference>
<dbReference type="EMBL" id="AY081570">
    <property type="protein sequence ID" value="AAM10132.1"/>
    <property type="molecule type" value="mRNA"/>
</dbReference>
<dbReference type="PIR" id="T00422">
    <property type="entry name" value="T00422"/>
</dbReference>
<dbReference type="RefSeq" id="NP_850476.1">
    <property type="nucleotide sequence ID" value="NM_180145.3"/>
</dbReference>
<dbReference type="SMR" id="Q8W475"/>
<dbReference type="BioGRID" id="4710">
    <property type="interactions" value="78"/>
</dbReference>
<dbReference type="ComplexPortal" id="CPX-7727">
    <property type="entry name" value="MINU1/2-associated SWI/SNF ATP-dependent chromatin remodeling complex"/>
</dbReference>
<dbReference type="FunCoup" id="Q8W475">
    <property type="interactions" value="409"/>
</dbReference>
<dbReference type="IntAct" id="Q8W475">
    <property type="interactions" value="18"/>
</dbReference>
<dbReference type="STRING" id="3702.Q8W475"/>
<dbReference type="PaxDb" id="3702-AT2G47620.1"/>
<dbReference type="ProteomicsDB" id="226537"/>
<dbReference type="EnsemblPlants" id="AT2G47620.1">
    <property type="protein sequence ID" value="AT2G47620.1"/>
    <property type="gene ID" value="AT2G47620"/>
</dbReference>
<dbReference type="GeneID" id="819375"/>
<dbReference type="Gramene" id="AT2G47620.1">
    <property type="protein sequence ID" value="AT2G47620.1"/>
    <property type="gene ID" value="AT2G47620"/>
</dbReference>
<dbReference type="KEGG" id="ath:AT2G47620"/>
<dbReference type="Araport" id="AT2G47620"/>
<dbReference type="TAIR" id="AT2G47620">
    <property type="gene designation" value="SWI3A"/>
</dbReference>
<dbReference type="eggNOG" id="KOG1279">
    <property type="taxonomic scope" value="Eukaryota"/>
</dbReference>
<dbReference type="HOGENOM" id="CLU_004447_5_1_1"/>
<dbReference type="InParanoid" id="Q8W475"/>
<dbReference type="OMA" id="MFISTTY"/>
<dbReference type="OrthoDB" id="118550at2759"/>
<dbReference type="PhylomeDB" id="Q8W475"/>
<dbReference type="PRO" id="PR:Q8W475"/>
<dbReference type="Proteomes" id="UP000006548">
    <property type="component" value="Chromosome 2"/>
</dbReference>
<dbReference type="ExpressionAtlas" id="Q8W475">
    <property type="expression patterns" value="baseline and differential"/>
</dbReference>
<dbReference type="GO" id="GO:0016514">
    <property type="term" value="C:SWI/SNF complex"/>
    <property type="evidence" value="ECO:0000250"/>
    <property type="project" value="TAIR"/>
</dbReference>
<dbReference type="GO" id="GO:0003677">
    <property type="term" value="F:DNA binding"/>
    <property type="evidence" value="ECO:0007669"/>
    <property type="project" value="UniProtKB-KW"/>
</dbReference>
<dbReference type="GO" id="GO:0006338">
    <property type="term" value="P:chromatin remodeling"/>
    <property type="evidence" value="ECO:0000250"/>
    <property type="project" value="TAIR"/>
</dbReference>
<dbReference type="FunFam" id="1.10.10.10:FF:000020">
    <property type="entry name" value="SWI/SNF complex subunit SMARCC2 isoform c"/>
    <property type="match status" value="1"/>
</dbReference>
<dbReference type="Gene3D" id="1.10.10.60">
    <property type="entry name" value="Homeodomain-like"/>
    <property type="match status" value="1"/>
</dbReference>
<dbReference type="Gene3D" id="1.10.10.10">
    <property type="entry name" value="Winged helix-like DNA-binding domain superfamily/Winged helix DNA-binding domain"/>
    <property type="match status" value="1"/>
</dbReference>
<dbReference type="InterPro" id="IPR009057">
    <property type="entry name" value="Homeodomain-like_sf"/>
</dbReference>
<dbReference type="InterPro" id="IPR001005">
    <property type="entry name" value="SANT/Myb"/>
</dbReference>
<dbReference type="InterPro" id="IPR017884">
    <property type="entry name" value="SANT_dom"/>
</dbReference>
<dbReference type="InterPro" id="IPR032451">
    <property type="entry name" value="SMARCC_C"/>
</dbReference>
<dbReference type="InterPro" id="IPR007526">
    <property type="entry name" value="SWIRM"/>
</dbReference>
<dbReference type="InterPro" id="IPR036388">
    <property type="entry name" value="WH-like_DNA-bd_sf"/>
</dbReference>
<dbReference type="PANTHER" id="PTHR12802">
    <property type="entry name" value="SWI/SNF COMPLEX-RELATED"/>
    <property type="match status" value="1"/>
</dbReference>
<dbReference type="PANTHER" id="PTHR12802:SF140">
    <property type="entry name" value="SWI_SNF COMPLEX SUBUNIT SWI3A"/>
    <property type="match status" value="1"/>
</dbReference>
<dbReference type="Pfam" id="PF00249">
    <property type="entry name" value="Myb_DNA-binding"/>
    <property type="match status" value="1"/>
</dbReference>
<dbReference type="Pfam" id="PF04433">
    <property type="entry name" value="SWIRM"/>
    <property type="match status" value="1"/>
</dbReference>
<dbReference type="Pfam" id="PF16495">
    <property type="entry name" value="SWIRM-assoc_1"/>
    <property type="match status" value="1"/>
</dbReference>
<dbReference type="SMART" id="SM00717">
    <property type="entry name" value="SANT"/>
    <property type="match status" value="1"/>
</dbReference>
<dbReference type="SUPFAM" id="SSF46689">
    <property type="entry name" value="Homeodomain-like"/>
    <property type="match status" value="2"/>
</dbReference>
<dbReference type="PROSITE" id="PS51293">
    <property type="entry name" value="SANT"/>
    <property type="match status" value="1"/>
</dbReference>
<dbReference type="PROSITE" id="PS50934">
    <property type="entry name" value="SWIRM"/>
    <property type="match status" value="1"/>
</dbReference>
<protein>
    <recommendedName>
        <fullName>SWI/SNF complex subunit SWI3A</fullName>
        <shortName>AtSWI3A</shortName>
    </recommendedName>
    <alternativeName>
        <fullName>Transcription regulatory protein SWI3A</fullName>
    </alternativeName>
</protein>
<gene>
    <name type="primary">SWI3A</name>
    <name type="synonym">CHB1</name>
    <name type="ordered locus">At2g47620</name>
    <name type="ORF">T30B22.7</name>
</gene>